<dbReference type="EMBL" id="ABDC03005851">
    <property type="status" value="NOT_ANNOTATED_CDS"/>
    <property type="molecule type" value="Genomic_DNA"/>
</dbReference>
<dbReference type="EMBL" id="ABDC03005852">
    <property type="status" value="NOT_ANNOTATED_CDS"/>
    <property type="molecule type" value="Genomic_DNA"/>
</dbReference>
<dbReference type="RefSeq" id="XP_012633630.1">
    <property type="nucleotide sequence ID" value="XM_012778176.2"/>
</dbReference>
<dbReference type="SMR" id="A0A8B7HA97"/>
<dbReference type="Ensembl" id="ENSMICT00000042921.2">
    <property type="protein sequence ID" value="ENSMICP00000017046.2"/>
    <property type="gene ID" value="ENSMICG00000034911.2"/>
</dbReference>
<dbReference type="GeneID" id="105878565"/>
<dbReference type="KEGG" id="mmur:105878565"/>
<dbReference type="CTD" id="283238"/>
<dbReference type="GeneTree" id="ENSGT00940000164763"/>
<dbReference type="OrthoDB" id="2544694at2759"/>
<dbReference type="Proteomes" id="UP000694394">
    <property type="component" value="Chromosome 5"/>
</dbReference>
<dbReference type="GO" id="GO:0005886">
    <property type="term" value="C:plasma membrane"/>
    <property type="evidence" value="ECO:0007669"/>
    <property type="project" value="UniProtKB-SubCell"/>
</dbReference>
<dbReference type="GO" id="GO:0022857">
    <property type="term" value="F:transmembrane transporter activity"/>
    <property type="evidence" value="ECO:0007669"/>
    <property type="project" value="InterPro"/>
</dbReference>
<dbReference type="GO" id="GO:0006811">
    <property type="term" value="P:monoatomic ion transport"/>
    <property type="evidence" value="ECO:0007669"/>
    <property type="project" value="UniProtKB-KW"/>
</dbReference>
<dbReference type="GO" id="GO:0008202">
    <property type="term" value="P:steroid metabolic process"/>
    <property type="evidence" value="ECO:0007669"/>
    <property type="project" value="UniProtKB-KW"/>
</dbReference>
<dbReference type="GO" id="GO:0035382">
    <property type="term" value="P:sterol transmembrane transport"/>
    <property type="evidence" value="ECO:0007669"/>
    <property type="project" value="Ensembl"/>
</dbReference>
<dbReference type="CDD" id="cd17374">
    <property type="entry name" value="MFS_OAT"/>
    <property type="match status" value="1"/>
</dbReference>
<dbReference type="FunFam" id="1.20.1250.20:FF:000023">
    <property type="entry name" value="Solute carrier family 22 member 6"/>
    <property type="match status" value="1"/>
</dbReference>
<dbReference type="Gene3D" id="1.20.1250.20">
    <property type="entry name" value="MFS general substrate transporter like domains"/>
    <property type="match status" value="1"/>
</dbReference>
<dbReference type="InterPro" id="IPR020846">
    <property type="entry name" value="MFS_dom"/>
</dbReference>
<dbReference type="InterPro" id="IPR005828">
    <property type="entry name" value="MFS_sugar_transport-like"/>
</dbReference>
<dbReference type="InterPro" id="IPR036259">
    <property type="entry name" value="MFS_trans_sf"/>
</dbReference>
<dbReference type="PANTHER" id="PTHR24064">
    <property type="entry name" value="SOLUTE CARRIER FAMILY 22 MEMBER"/>
    <property type="match status" value="1"/>
</dbReference>
<dbReference type="Pfam" id="PF00083">
    <property type="entry name" value="Sugar_tr"/>
    <property type="match status" value="1"/>
</dbReference>
<dbReference type="SUPFAM" id="SSF103473">
    <property type="entry name" value="MFS general substrate transporter"/>
    <property type="match status" value="1"/>
</dbReference>
<dbReference type="PROSITE" id="PS50850">
    <property type="entry name" value="MFS"/>
    <property type="match status" value="1"/>
</dbReference>
<name>S22AO_MICMU</name>
<protein>
    <recommendedName>
        <fullName>Steroid transmembrane transporter SLC22A24</fullName>
    </recommendedName>
    <alternativeName>
        <fullName evidence="1">Solute carrier family 22 member 24</fullName>
    </alternativeName>
</protein>
<gene>
    <name evidence="1" type="primary">SLC22A24</name>
</gene>
<evidence type="ECO:0000250" key="1">
    <source>
        <dbReference type="UniProtKB" id="Q8N4F4"/>
    </source>
</evidence>
<evidence type="ECO:0000255" key="2"/>
<evidence type="ECO:0000269" key="3">
    <source>
    </source>
</evidence>
<evidence type="ECO:0000305" key="4"/>
<evidence type="ECO:0000305" key="5">
    <source>
    </source>
</evidence>
<keyword id="KW-1003">Cell membrane</keyword>
<keyword id="KW-0406">Ion transport</keyword>
<keyword id="KW-0443">Lipid metabolism</keyword>
<keyword id="KW-0445">Lipid transport</keyword>
<keyword id="KW-0472">Membrane</keyword>
<keyword id="KW-1185">Reference proteome</keyword>
<keyword id="KW-0753">Steroid metabolism</keyword>
<keyword id="KW-0812">Transmembrane</keyword>
<keyword id="KW-1133">Transmembrane helix</keyword>
<keyword id="KW-0813">Transport</keyword>
<organism>
    <name type="scientific">Microcebus murinus</name>
    <name type="common">Gray mouse lemur</name>
    <name type="synonym">Lemur murinus</name>
    <dbReference type="NCBI Taxonomy" id="30608"/>
    <lineage>
        <taxon>Eukaryota</taxon>
        <taxon>Metazoa</taxon>
        <taxon>Chordata</taxon>
        <taxon>Craniata</taxon>
        <taxon>Vertebrata</taxon>
        <taxon>Euteleostomi</taxon>
        <taxon>Mammalia</taxon>
        <taxon>Eutheria</taxon>
        <taxon>Euarchontoglires</taxon>
        <taxon>Primates</taxon>
        <taxon>Strepsirrhini</taxon>
        <taxon>Lemuriformes</taxon>
        <taxon>Cheirogaleidae</taxon>
        <taxon>Microcebus</taxon>
    </lineage>
</organism>
<feature type="chain" id="PRO_0000456643" description="Steroid transmembrane transporter SLC22A24">
    <location>
        <begin position="1"/>
        <end position="552"/>
    </location>
</feature>
<feature type="transmembrane region" description="Helical" evidence="2">
    <location>
        <begin position="16"/>
        <end position="36"/>
    </location>
</feature>
<feature type="transmembrane region" description="Helical" evidence="2">
    <location>
        <begin position="146"/>
        <end position="166"/>
    </location>
</feature>
<feature type="transmembrane region" description="Helical" evidence="2">
    <location>
        <begin position="174"/>
        <end position="194"/>
    </location>
</feature>
<feature type="transmembrane region" description="Helical" evidence="2">
    <location>
        <begin position="204"/>
        <end position="224"/>
    </location>
</feature>
<feature type="transmembrane region" description="Helical" evidence="2">
    <location>
        <begin position="235"/>
        <end position="255"/>
    </location>
</feature>
<feature type="transmembrane region" description="Helical" evidence="2">
    <location>
        <begin position="260"/>
        <end position="280"/>
    </location>
</feature>
<feature type="transmembrane region" description="Helical" evidence="2">
    <location>
        <begin position="349"/>
        <end position="369"/>
    </location>
</feature>
<feature type="transmembrane region" description="Helical" evidence="2">
    <location>
        <begin position="380"/>
        <end position="400"/>
    </location>
</feature>
<feature type="transmembrane region" description="Helical" evidence="2">
    <location>
        <begin position="407"/>
        <end position="427"/>
    </location>
</feature>
<feature type="transmembrane region" description="Helical" evidence="2">
    <location>
        <begin position="436"/>
        <end position="456"/>
    </location>
</feature>
<feature type="transmembrane region" description="Helical" evidence="2">
    <location>
        <begin position="473"/>
        <end position="493"/>
    </location>
</feature>
<feature type="transmembrane region" description="Helical" evidence="2">
    <location>
        <begin position="495"/>
        <end position="515"/>
    </location>
</feature>
<sequence length="552" mass="61792">MAFAVLLDQVGSLGRFQILQLAFLCIANILLFPHILLENFTAAVPGHRCWVHILDNDTVSHNDTGTLGQDALLRISIPLDSNLKPEKCRRFVHPQWQLLHLNRTFSNTSEPDTEPCVDGWVYEQSSFFSTVVTEWDLVCEWESQKSVVQSLFMAGSLLGSVIFGYLSDRFGRKMICSWCLLQLAISDTCAAFAPTFSVYCSLRFLAGSCVMTIMGHSFLLVIEWTNPQSRSMVTTLLLCASSVGQMLLGGLAFVIQDWRTLQLTVSIPIFVIFLSSRWLVESARWLITYNQLDKGLKELRRAARINGKKNAGEILTIEFLRSAMQEELDAARSQASIFCLFHAPRLRMIVLYLGFVRLAVSVPLYGLIFNLQYLGRNIYLFQVLFGAITATARFVALLVMNYMGRRISQVLFLLPVGLFILVNTFLDQEMQTLRTILATLGAGVLCIATTSGSVHFSELIPTVLRGTGGGINILFSRIGAALAPLLMIFVGFSPYLPWITYGVFPILAGLVVLLLPETKNLPLPNTIQDVENDRKETRKVKQEDNCMKVTQF</sequence>
<proteinExistence type="inferred from homology"/>
<accession>A0A8B7HA97</accession>
<reference key="1">
    <citation type="journal article" date="2017" name="BMC Biol.">
        <title>Hybrid de novo genome assembly and centromere characterization of the gray mouse lemur (Microcebus murinus).</title>
        <authorList>
            <person name="Larsen P.A."/>
            <person name="Harris R.A."/>
            <person name="Liu Y."/>
            <person name="Murali S.C."/>
            <person name="Campbell C.R."/>
            <person name="Brown A.D."/>
            <person name="Sullivan B.A."/>
            <person name="Shelton J."/>
            <person name="Brown S.J."/>
            <person name="Raveendran M."/>
            <person name="Dudchenko O."/>
            <person name="Machol I."/>
            <person name="Durand N.C."/>
            <person name="Shamim M.S."/>
            <person name="Aiden E.L."/>
            <person name="Muzny D.M."/>
            <person name="Gibbs R.A."/>
            <person name="Yoder A.D."/>
            <person name="Rogers J."/>
            <person name="Worley K.C."/>
        </authorList>
    </citation>
    <scope>NUCLEOTIDE SEQUENCE [LARGE SCALE GENOMIC DNA]</scope>
</reference>
<reference key="2">
    <citation type="journal article" date="2019" name="PLoS Genet.">
        <title>Unraveling the functional role of the orphan solute carrier, SLC22A24 in the transport of steroid conjugates through metabolomic and genome-wide association studies.</title>
        <authorList>
            <person name="Yee S.W."/>
            <person name="Stecula A."/>
            <person name="Chien H.C."/>
            <person name="Zou L."/>
            <person name="Feofanova E.V."/>
            <person name="van Borselen M."/>
            <person name="Cheung K.W.K."/>
            <person name="Yousri N.A."/>
            <person name="Suhre K."/>
            <person name="Kinchen J.M."/>
            <person name="Boerwinkle E."/>
            <person name="Irannejad R."/>
            <person name="Yu B."/>
            <person name="Giacomini K.M."/>
        </authorList>
    </citation>
    <scope>FUNCTION</scope>
    <scope>TRANSPORTER ACTIVITY</scope>
    <scope>SUBCELLULAR LOCATION</scope>
</reference>
<comment type="function">
    <text evidence="1 3">Renal transmembrane organic anion/dicarboxylate exchanger that participates in the reabsorption of conjugated steroids, as well as bile acids, driven by an outward gradient of dicarboxylates such as glutarate or succinate (By similarity). Transports androstanediol glucuronide (5alpha-androstane-3alpha,17beta-diol 3-O-(beta-D-glucuronate)), estrone 3-sulfate, and estradiol-17-glucuronide (17beta-estradiol 17-O-(beta-D-glucuronate)), but not taurocholate (PubMed:31553721).</text>
</comment>
<comment type="catalytic activity">
    <reaction evidence="5">
        <text>estrone 3-sulfate(out) + glutarate(in) = estrone 3-sulfate(in) + glutarate(out)</text>
        <dbReference type="Rhea" id="RHEA:72151"/>
        <dbReference type="ChEBI" id="CHEBI:30921"/>
        <dbReference type="ChEBI" id="CHEBI:60050"/>
    </reaction>
</comment>
<comment type="catalytic activity">
    <reaction evidence="5">
        <text>17beta-estradiol 17-O-(beta-D-glucuronate)(out) + glutarate(in) = 17beta-estradiol 17-O-(beta-D-glucuronate)(in) + glutarate(out)</text>
        <dbReference type="Rhea" id="RHEA:72155"/>
        <dbReference type="ChEBI" id="CHEBI:30921"/>
        <dbReference type="ChEBI" id="CHEBI:82961"/>
    </reaction>
</comment>
<comment type="catalytic activity">
    <reaction evidence="5">
        <text>5alpha-androstane-3alpha,17beta-diol 3-O-(beta-D-glucuronate)(out) + glutarate(in) = 5alpha-androstane-3alpha,17beta-diol 3-O-(beta-D-glucuronate)(in) + glutarate(out)</text>
        <dbReference type="Rhea" id="RHEA:72175"/>
        <dbReference type="ChEBI" id="CHEBI:30921"/>
        <dbReference type="ChEBI" id="CHEBI:191859"/>
    </reaction>
</comment>
<comment type="catalytic activity">
    <reaction evidence="1">
        <text>dehydroepiandrosterone 3-sulfate(out) + glutarate(in) = dehydroepiandrosterone 3-sulfate(in) + glutarate(out)</text>
        <dbReference type="Rhea" id="RHEA:72355"/>
        <dbReference type="ChEBI" id="CHEBI:30921"/>
        <dbReference type="ChEBI" id="CHEBI:57905"/>
    </reaction>
</comment>
<comment type="catalytic activity">
    <reaction evidence="1">
        <text>glutarate(in) + succinate(out) = glutarate(out) + succinate(in)</text>
        <dbReference type="Rhea" id="RHEA:72359"/>
        <dbReference type="ChEBI" id="CHEBI:30031"/>
        <dbReference type="ChEBI" id="CHEBI:30921"/>
    </reaction>
</comment>
<comment type="subcellular location">
    <subcellularLocation>
        <location evidence="3">Cell membrane</location>
        <topology evidence="2">Multi-pass membrane protein</topology>
    </subcellularLocation>
</comment>
<comment type="similarity">
    <text evidence="4">Belongs to the major facilitator (TC 2.A.1) superfamily. Organic cation transporter (TC 2.A.1.19) family.</text>
</comment>